<comment type="function">
    <text evidence="1">Catalyzes the hydrolysis of the adenine ring of phosphoribosyl-AMP.</text>
</comment>
<comment type="catalytic activity">
    <reaction evidence="1">
        <text>1-(5-phospho-beta-D-ribosyl)-5'-AMP + H2O = 1-(5-phospho-beta-D-ribosyl)-5-[(5-phospho-beta-D-ribosylamino)methylideneamino]imidazole-4-carboxamide</text>
        <dbReference type="Rhea" id="RHEA:20049"/>
        <dbReference type="ChEBI" id="CHEBI:15377"/>
        <dbReference type="ChEBI" id="CHEBI:58435"/>
        <dbReference type="ChEBI" id="CHEBI:59457"/>
        <dbReference type="EC" id="3.5.4.19"/>
    </reaction>
</comment>
<comment type="cofactor">
    <cofactor evidence="1">
        <name>Mg(2+)</name>
        <dbReference type="ChEBI" id="CHEBI:18420"/>
    </cofactor>
    <text evidence="1">Binds 1 Mg(2+) ion per subunit.</text>
</comment>
<comment type="cofactor">
    <cofactor evidence="1">
        <name>Zn(2+)</name>
        <dbReference type="ChEBI" id="CHEBI:29105"/>
    </cofactor>
    <text evidence="1">Binds 1 zinc ion per subunit.</text>
</comment>
<comment type="pathway">
    <text evidence="1">Amino-acid biosynthesis; L-histidine biosynthesis; L-histidine from 5-phospho-alpha-D-ribose 1-diphosphate: step 3/9.</text>
</comment>
<comment type="subunit">
    <text evidence="1">Homodimer.</text>
</comment>
<comment type="subcellular location">
    <subcellularLocation>
        <location evidence="1">Cytoplasm</location>
    </subcellularLocation>
</comment>
<comment type="similarity">
    <text evidence="1">Belongs to the PRA-CH family.</text>
</comment>
<dbReference type="EC" id="3.5.4.19" evidence="1"/>
<dbReference type="EMBL" id="CP000559">
    <property type="protein sequence ID" value="ABN07572.1"/>
    <property type="molecule type" value="Genomic_DNA"/>
</dbReference>
<dbReference type="RefSeq" id="WP_011833775.1">
    <property type="nucleotide sequence ID" value="NC_008942.1"/>
</dbReference>
<dbReference type="SMR" id="A2STB6"/>
<dbReference type="STRING" id="410358.Mlab_1406"/>
<dbReference type="GeneID" id="4794816"/>
<dbReference type="KEGG" id="mla:Mlab_1406"/>
<dbReference type="eggNOG" id="arCOG02676">
    <property type="taxonomic scope" value="Archaea"/>
</dbReference>
<dbReference type="HOGENOM" id="CLU_048577_5_0_2"/>
<dbReference type="OrthoDB" id="5853at2157"/>
<dbReference type="UniPathway" id="UPA00031">
    <property type="reaction ID" value="UER00008"/>
</dbReference>
<dbReference type="Proteomes" id="UP000000365">
    <property type="component" value="Chromosome"/>
</dbReference>
<dbReference type="GO" id="GO:0005737">
    <property type="term" value="C:cytoplasm"/>
    <property type="evidence" value="ECO:0007669"/>
    <property type="project" value="UniProtKB-SubCell"/>
</dbReference>
<dbReference type="GO" id="GO:0000287">
    <property type="term" value="F:magnesium ion binding"/>
    <property type="evidence" value="ECO:0007669"/>
    <property type="project" value="UniProtKB-UniRule"/>
</dbReference>
<dbReference type="GO" id="GO:0004635">
    <property type="term" value="F:phosphoribosyl-AMP cyclohydrolase activity"/>
    <property type="evidence" value="ECO:0007669"/>
    <property type="project" value="UniProtKB-UniRule"/>
</dbReference>
<dbReference type="GO" id="GO:0008270">
    <property type="term" value="F:zinc ion binding"/>
    <property type="evidence" value="ECO:0007669"/>
    <property type="project" value="UniProtKB-UniRule"/>
</dbReference>
<dbReference type="GO" id="GO:0000105">
    <property type="term" value="P:L-histidine biosynthetic process"/>
    <property type="evidence" value="ECO:0007669"/>
    <property type="project" value="UniProtKB-UniRule"/>
</dbReference>
<dbReference type="FunFam" id="3.10.20.810:FF:000001">
    <property type="entry name" value="Histidine biosynthesis bifunctional protein HisIE"/>
    <property type="match status" value="1"/>
</dbReference>
<dbReference type="Gene3D" id="3.10.20.810">
    <property type="entry name" value="Phosphoribosyl-AMP cyclohydrolase"/>
    <property type="match status" value="1"/>
</dbReference>
<dbReference type="HAMAP" id="MF_01021">
    <property type="entry name" value="HisI"/>
    <property type="match status" value="1"/>
</dbReference>
<dbReference type="InterPro" id="IPR026660">
    <property type="entry name" value="PRA-CH"/>
</dbReference>
<dbReference type="InterPro" id="IPR002496">
    <property type="entry name" value="PRib_AMP_CycHydrolase_dom"/>
</dbReference>
<dbReference type="InterPro" id="IPR038019">
    <property type="entry name" value="PRib_AMP_CycHydrolase_sf"/>
</dbReference>
<dbReference type="NCBIfam" id="NF000768">
    <property type="entry name" value="PRK00051.1"/>
    <property type="match status" value="1"/>
</dbReference>
<dbReference type="PANTHER" id="PTHR42945">
    <property type="entry name" value="HISTIDINE BIOSYNTHESIS BIFUNCTIONAL PROTEIN"/>
    <property type="match status" value="1"/>
</dbReference>
<dbReference type="PANTHER" id="PTHR42945:SF1">
    <property type="entry name" value="HISTIDINE BIOSYNTHESIS BIFUNCTIONAL PROTEIN HIS7"/>
    <property type="match status" value="1"/>
</dbReference>
<dbReference type="Pfam" id="PF01502">
    <property type="entry name" value="PRA-CH"/>
    <property type="match status" value="1"/>
</dbReference>
<dbReference type="SUPFAM" id="SSF141734">
    <property type="entry name" value="HisI-like"/>
    <property type="match status" value="1"/>
</dbReference>
<organism>
    <name type="scientific">Methanocorpusculum labreanum (strain ATCC 43576 / DSM 4855 / Z)</name>
    <dbReference type="NCBI Taxonomy" id="410358"/>
    <lineage>
        <taxon>Archaea</taxon>
        <taxon>Methanobacteriati</taxon>
        <taxon>Methanobacteriota</taxon>
        <taxon>Stenosarchaea group</taxon>
        <taxon>Methanomicrobia</taxon>
        <taxon>Methanomicrobiales</taxon>
        <taxon>Methanocorpusculaceae</taxon>
        <taxon>Methanocorpusculum</taxon>
    </lineage>
</organism>
<proteinExistence type="inferred from homology"/>
<feature type="chain" id="PRO_0000319730" description="Phosphoribosyl-AMP cyclohydrolase">
    <location>
        <begin position="1"/>
        <end position="123"/>
    </location>
</feature>
<feature type="binding site" evidence="1">
    <location>
        <position position="76"/>
    </location>
    <ligand>
        <name>Mg(2+)</name>
        <dbReference type="ChEBI" id="CHEBI:18420"/>
    </ligand>
</feature>
<feature type="binding site" evidence="1">
    <location>
        <position position="77"/>
    </location>
    <ligand>
        <name>Zn(2+)</name>
        <dbReference type="ChEBI" id="CHEBI:29105"/>
        <note>ligand shared between dimeric partners</note>
    </ligand>
</feature>
<feature type="binding site" evidence="1">
    <location>
        <position position="78"/>
    </location>
    <ligand>
        <name>Mg(2+)</name>
        <dbReference type="ChEBI" id="CHEBI:18420"/>
    </ligand>
</feature>
<feature type="binding site" evidence="1">
    <location>
        <position position="80"/>
    </location>
    <ligand>
        <name>Mg(2+)</name>
        <dbReference type="ChEBI" id="CHEBI:18420"/>
    </ligand>
</feature>
<feature type="binding site" evidence="1">
    <location>
        <position position="93"/>
    </location>
    <ligand>
        <name>Zn(2+)</name>
        <dbReference type="ChEBI" id="CHEBI:29105"/>
        <note>ligand shared between dimeric partners</note>
    </ligand>
</feature>
<feature type="binding site" evidence="1">
    <location>
        <position position="100"/>
    </location>
    <ligand>
        <name>Zn(2+)</name>
        <dbReference type="ChEBI" id="CHEBI:29105"/>
        <note>ligand shared between dimeric partners</note>
    </ligand>
</feature>
<gene>
    <name evidence="1" type="primary">hisI</name>
    <name type="ordered locus">Mlab_1406</name>
</gene>
<name>HIS3_METLZ</name>
<keyword id="KW-0028">Amino-acid biosynthesis</keyword>
<keyword id="KW-0963">Cytoplasm</keyword>
<keyword id="KW-0368">Histidine biosynthesis</keyword>
<keyword id="KW-0378">Hydrolase</keyword>
<keyword id="KW-0460">Magnesium</keyword>
<keyword id="KW-0479">Metal-binding</keyword>
<keyword id="KW-1185">Reference proteome</keyword>
<keyword id="KW-0862">Zinc</keyword>
<reference key="1">
    <citation type="journal article" date="2009" name="Stand. Genomic Sci.">
        <title>Complete genome sequence of Methanocorpusculum labreanum type strain Z.</title>
        <authorList>
            <person name="Anderson I.J."/>
            <person name="Sieprawska-Lupa M."/>
            <person name="Goltsman E."/>
            <person name="Lapidus A."/>
            <person name="Copeland A."/>
            <person name="Glavina Del Rio T."/>
            <person name="Tice H."/>
            <person name="Dalin E."/>
            <person name="Barry K."/>
            <person name="Pitluck S."/>
            <person name="Hauser L."/>
            <person name="Land M."/>
            <person name="Lucas S."/>
            <person name="Richardson P."/>
            <person name="Whitman W.B."/>
            <person name="Kyrpides N.C."/>
        </authorList>
    </citation>
    <scope>NUCLEOTIDE SEQUENCE [LARGE SCALE GENOMIC DNA]</scope>
    <source>
        <strain>ATCC 43576 / DSM 4855 / Z</strain>
    </source>
</reference>
<accession>A2STB6</accession>
<evidence type="ECO:0000255" key="1">
    <source>
        <dbReference type="HAMAP-Rule" id="MF_01021"/>
    </source>
</evidence>
<protein>
    <recommendedName>
        <fullName evidence="1">Phosphoribosyl-AMP cyclohydrolase</fullName>
        <shortName evidence="1">PRA-CH</shortName>
        <ecNumber evidence="1">3.5.4.19</ecNumber>
    </recommendedName>
</protein>
<sequence>MPDLFPSLKYHDGLIPVIVQDAKTLQVLMFAFANEEAVSLTRSTGYAHYFSRSRNKLWKKGEESGHLQKIVRICVDCDEDCLLYLVEQTGCACHEGYASCFFRTMEGEVILPRLKDPADIYSR</sequence>